<evidence type="ECO:0000250" key="1"/>
<evidence type="ECO:0000255" key="2"/>
<evidence type="ECO:0000305" key="3"/>
<name>PSB28_ARATH</name>
<organism>
    <name type="scientific">Arabidopsis thaliana</name>
    <name type="common">Mouse-ear cress</name>
    <dbReference type="NCBI Taxonomy" id="3702"/>
    <lineage>
        <taxon>Eukaryota</taxon>
        <taxon>Viridiplantae</taxon>
        <taxon>Streptophyta</taxon>
        <taxon>Embryophyta</taxon>
        <taxon>Tracheophyta</taxon>
        <taxon>Spermatophyta</taxon>
        <taxon>Magnoliopsida</taxon>
        <taxon>eudicotyledons</taxon>
        <taxon>Gunneridae</taxon>
        <taxon>Pentapetalae</taxon>
        <taxon>rosids</taxon>
        <taxon>malvids</taxon>
        <taxon>Brassicales</taxon>
        <taxon>Brassicaceae</taxon>
        <taxon>Camelineae</taxon>
        <taxon>Arabidopsis</taxon>
    </lineage>
</organism>
<comment type="subunit">
    <text evidence="3">Part of the photosystem II complex.</text>
</comment>
<comment type="subcellular location">
    <subcellularLocation>
        <location evidence="1">Plastid</location>
        <location evidence="1">Chloroplast thylakoid membrane</location>
        <topology evidence="1">Peripheral membrane protein</topology>
        <orientation evidence="1">Stromal side</orientation>
    </subcellularLocation>
</comment>
<comment type="alternative products">
    <event type="alternative splicing"/>
    <isoform>
        <id>Q8W0Y8-1</id>
        <name>1</name>
        <sequence type="displayed"/>
    </isoform>
    <text>A number of isoforms are produced. According to EST sequences.</text>
</comment>
<comment type="similarity">
    <text evidence="3">Belongs to the Psb28 family.</text>
</comment>
<comment type="sequence caution" evidence="3">
    <conflict type="erroneous gene model prediction">
        <sequence resource="EMBL-CDS" id="CAB81454"/>
    </conflict>
</comment>
<reference key="1">
    <citation type="journal article" date="1999" name="Nature">
        <title>Sequence and analysis of chromosome 4 of the plant Arabidopsis thaliana.</title>
        <authorList>
            <person name="Mayer K.F.X."/>
            <person name="Schueller C."/>
            <person name="Wambutt R."/>
            <person name="Murphy G."/>
            <person name="Volckaert G."/>
            <person name="Pohl T."/>
            <person name="Duesterhoeft A."/>
            <person name="Stiekema W."/>
            <person name="Entian K.-D."/>
            <person name="Terryn N."/>
            <person name="Harris B."/>
            <person name="Ansorge W."/>
            <person name="Brandt P."/>
            <person name="Grivell L.A."/>
            <person name="Rieger M."/>
            <person name="Weichselgartner M."/>
            <person name="de Simone V."/>
            <person name="Obermaier B."/>
            <person name="Mache R."/>
            <person name="Mueller M."/>
            <person name="Kreis M."/>
            <person name="Delseny M."/>
            <person name="Puigdomenech P."/>
            <person name="Watson M."/>
            <person name="Schmidtheini T."/>
            <person name="Reichert B."/>
            <person name="Portetelle D."/>
            <person name="Perez-Alonso M."/>
            <person name="Boutry M."/>
            <person name="Bancroft I."/>
            <person name="Vos P."/>
            <person name="Hoheisel J."/>
            <person name="Zimmermann W."/>
            <person name="Wedler H."/>
            <person name="Ridley P."/>
            <person name="Langham S.-A."/>
            <person name="McCullagh B."/>
            <person name="Bilham L."/>
            <person name="Robben J."/>
            <person name="van der Schueren J."/>
            <person name="Grymonprez B."/>
            <person name="Chuang Y.-J."/>
            <person name="Vandenbussche F."/>
            <person name="Braeken M."/>
            <person name="Weltjens I."/>
            <person name="Voet M."/>
            <person name="Bastiaens I."/>
            <person name="Aert R."/>
            <person name="Defoor E."/>
            <person name="Weitzenegger T."/>
            <person name="Bothe G."/>
            <person name="Ramsperger U."/>
            <person name="Hilbert H."/>
            <person name="Braun M."/>
            <person name="Holzer E."/>
            <person name="Brandt A."/>
            <person name="Peters S."/>
            <person name="van Staveren M."/>
            <person name="Dirkse W."/>
            <person name="Mooijman P."/>
            <person name="Klein Lankhorst R."/>
            <person name="Rose M."/>
            <person name="Hauf J."/>
            <person name="Koetter P."/>
            <person name="Berneiser S."/>
            <person name="Hempel S."/>
            <person name="Feldpausch M."/>
            <person name="Lamberth S."/>
            <person name="Van den Daele H."/>
            <person name="De Keyser A."/>
            <person name="Buysshaert C."/>
            <person name="Gielen J."/>
            <person name="Villarroel R."/>
            <person name="De Clercq R."/>
            <person name="van Montagu M."/>
            <person name="Rogers J."/>
            <person name="Cronin A."/>
            <person name="Quail M.A."/>
            <person name="Bray-Allen S."/>
            <person name="Clark L."/>
            <person name="Doggett J."/>
            <person name="Hall S."/>
            <person name="Kay M."/>
            <person name="Lennard N."/>
            <person name="McLay K."/>
            <person name="Mayes R."/>
            <person name="Pettett A."/>
            <person name="Rajandream M.A."/>
            <person name="Lyne M."/>
            <person name="Benes V."/>
            <person name="Rechmann S."/>
            <person name="Borkova D."/>
            <person name="Bloecker H."/>
            <person name="Scharfe M."/>
            <person name="Grimm M."/>
            <person name="Loehnert T.-H."/>
            <person name="Dose S."/>
            <person name="de Haan M."/>
            <person name="Maarse A.C."/>
            <person name="Schaefer M."/>
            <person name="Mueller-Auer S."/>
            <person name="Gabel C."/>
            <person name="Fuchs M."/>
            <person name="Fartmann B."/>
            <person name="Granderath K."/>
            <person name="Dauner D."/>
            <person name="Herzl A."/>
            <person name="Neumann S."/>
            <person name="Argiriou A."/>
            <person name="Vitale D."/>
            <person name="Liguori R."/>
            <person name="Piravandi E."/>
            <person name="Massenet O."/>
            <person name="Quigley F."/>
            <person name="Clabauld G."/>
            <person name="Muendlein A."/>
            <person name="Felber R."/>
            <person name="Schnabl S."/>
            <person name="Hiller R."/>
            <person name="Schmidt W."/>
            <person name="Lecharny A."/>
            <person name="Aubourg S."/>
            <person name="Chefdor F."/>
            <person name="Cooke R."/>
            <person name="Berger C."/>
            <person name="Monfort A."/>
            <person name="Casacuberta E."/>
            <person name="Gibbons T."/>
            <person name="Weber N."/>
            <person name="Vandenbol M."/>
            <person name="Bargues M."/>
            <person name="Terol J."/>
            <person name="Torres A."/>
            <person name="Perez-Perez A."/>
            <person name="Purnelle B."/>
            <person name="Bent E."/>
            <person name="Johnson S."/>
            <person name="Tacon D."/>
            <person name="Jesse T."/>
            <person name="Heijnen L."/>
            <person name="Schwarz S."/>
            <person name="Scholler P."/>
            <person name="Heber S."/>
            <person name="Francs P."/>
            <person name="Bielke C."/>
            <person name="Frishman D."/>
            <person name="Haase D."/>
            <person name="Lemcke K."/>
            <person name="Mewes H.-W."/>
            <person name="Stocker S."/>
            <person name="Zaccaria P."/>
            <person name="Bevan M."/>
            <person name="Wilson R.K."/>
            <person name="de la Bastide M."/>
            <person name="Habermann K."/>
            <person name="Parnell L."/>
            <person name="Dedhia N."/>
            <person name="Gnoj L."/>
            <person name="Schutz K."/>
            <person name="Huang E."/>
            <person name="Spiegel L."/>
            <person name="Sekhon M."/>
            <person name="Murray J."/>
            <person name="Sheet P."/>
            <person name="Cordes M."/>
            <person name="Abu-Threideh J."/>
            <person name="Stoneking T."/>
            <person name="Kalicki J."/>
            <person name="Graves T."/>
            <person name="Harmon G."/>
            <person name="Edwards J."/>
            <person name="Latreille P."/>
            <person name="Courtney L."/>
            <person name="Cloud J."/>
            <person name="Abbott A."/>
            <person name="Scott K."/>
            <person name="Johnson D."/>
            <person name="Minx P."/>
            <person name="Bentley D."/>
            <person name="Fulton B."/>
            <person name="Miller N."/>
            <person name="Greco T."/>
            <person name="Kemp K."/>
            <person name="Kramer J."/>
            <person name="Fulton L."/>
            <person name="Mardis E."/>
            <person name="Dante M."/>
            <person name="Pepin K."/>
            <person name="Hillier L.W."/>
            <person name="Nelson J."/>
            <person name="Spieth J."/>
            <person name="Ryan E."/>
            <person name="Andrews S."/>
            <person name="Geisel C."/>
            <person name="Layman D."/>
            <person name="Du H."/>
            <person name="Ali J."/>
            <person name="Berghoff A."/>
            <person name="Jones K."/>
            <person name="Drone K."/>
            <person name="Cotton M."/>
            <person name="Joshu C."/>
            <person name="Antonoiu B."/>
            <person name="Zidanic M."/>
            <person name="Strong C."/>
            <person name="Sun H."/>
            <person name="Lamar B."/>
            <person name="Yordan C."/>
            <person name="Ma P."/>
            <person name="Zhong J."/>
            <person name="Preston R."/>
            <person name="Vil D."/>
            <person name="Shekher M."/>
            <person name="Matero A."/>
            <person name="Shah R."/>
            <person name="Swaby I.K."/>
            <person name="O'Shaughnessy A."/>
            <person name="Rodriguez M."/>
            <person name="Hoffman J."/>
            <person name="Till S."/>
            <person name="Granat S."/>
            <person name="Shohdy N."/>
            <person name="Hasegawa A."/>
            <person name="Hameed A."/>
            <person name="Lodhi M."/>
            <person name="Johnson A."/>
            <person name="Chen E."/>
            <person name="Marra M.A."/>
            <person name="Martienssen R."/>
            <person name="McCombie W.R."/>
        </authorList>
    </citation>
    <scope>NUCLEOTIDE SEQUENCE [LARGE SCALE GENOMIC DNA]</scope>
    <source>
        <strain>cv. Columbia</strain>
    </source>
</reference>
<reference key="2">
    <citation type="journal article" date="2017" name="Plant J.">
        <title>Araport11: a complete reannotation of the Arabidopsis thaliana reference genome.</title>
        <authorList>
            <person name="Cheng C.Y."/>
            <person name="Krishnakumar V."/>
            <person name="Chan A.P."/>
            <person name="Thibaud-Nissen F."/>
            <person name="Schobel S."/>
            <person name="Town C.D."/>
        </authorList>
    </citation>
    <scope>GENOME REANNOTATION</scope>
    <source>
        <strain>cv. Columbia</strain>
    </source>
</reference>
<reference key="3">
    <citation type="journal article" date="2003" name="Science">
        <title>Empirical analysis of transcriptional activity in the Arabidopsis genome.</title>
        <authorList>
            <person name="Yamada K."/>
            <person name="Lim J."/>
            <person name="Dale J.M."/>
            <person name="Chen H."/>
            <person name="Shinn P."/>
            <person name="Palm C.J."/>
            <person name="Southwick A.M."/>
            <person name="Wu H.C."/>
            <person name="Kim C.J."/>
            <person name="Nguyen M."/>
            <person name="Pham P.K."/>
            <person name="Cheuk R.F."/>
            <person name="Karlin-Newmann G."/>
            <person name="Liu S.X."/>
            <person name="Lam B."/>
            <person name="Sakano H."/>
            <person name="Wu T."/>
            <person name="Yu G."/>
            <person name="Miranda M."/>
            <person name="Quach H.L."/>
            <person name="Tripp M."/>
            <person name="Chang C.H."/>
            <person name="Lee J.M."/>
            <person name="Toriumi M.J."/>
            <person name="Chan M.M."/>
            <person name="Tang C.C."/>
            <person name="Onodera C.S."/>
            <person name="Deng J.M."/>
            <person name="Akiyama K."/>
            <person name="Ansari Y."/>
            <person name="Arakawa T."/>
            <person name="Banh J."/>
            <person name="Banno F."/>
            <person name="Bowser L."/>
            <person name="Brooks S.Y."/>
            <person name="Carninci P."/>
            <person name="Chao Q."/>
            <person name="Choy N."/>
            <person name="Enju A."/>
            <person name="Goldsmith A.D."/>
            <person name="Gurjal M."/>
            <person name="Hansen N.F."/>
            <person name="Hayashizaki Y."/>
            <person name="Johnson-Hopson C."/>
            <person name="Hsuan V.W."/>
            <person name="Iida K."/>
            <person name="Karnes M."/>
            <person name="Khan S."/>
            <person name="Koesema E."/>
            <person name="Ishida J."/>
            <person name="Jiang P.X."/>
            <person name="Jones T."/>
            <person name="Kawai J."/>
            <person name="Kamiya A."/>
            <person name="Meyers C."/>
            <person name="Nakajima M."/>
            <person name="Narusaka M."/>
            <person name="Seki M."/>
            <person name="Sakurai T."/>
            <person name="Satou M."/>
            <person name="Tamse R."/>
            <person name="Vaysberg M."/>
            <person name="Wallender E.K."/>
            <person name="Wong C."/>
            <person name="Yamamura Y."/>
            <person name="Yuan S."/>
            <person name="Shinozaki K."/>
            <person name="Davis R.W."/>
            <person name="Theologis A."/>
            <person name="Ecker J.R."/>
        </authorList>
    </citation>
    <scope>NUCLEOTIDE SEQUENCE [LARGE SCALE MRNA]</scope>
    <source>
        <strain>cv. Columbia</strain>
    </source>
</reference>
<reference key="4">
    <citation type="submission" date="2002-03" db="EMBL/GenBank/DDBJ databases">
        <title>Full-length cDNA from Arabidopsis thaliana.</title>
        <authorList>
            <person name="Brover V.V."/>
            <person name="Troukhan M.E."/>
            <person name="Alexandrov N.A."/>
            <person name="Lu Y.-P."/>
            <person name="Flavell R.B."/>
            <person name="Feldmann K.A."/>
        </authorList>
    </citation>
    <scope>NUCLEOTIDE SEQUENCE [LARGE SCALE MRNA]</scope>
</reference>
<accession>Q8W0Y8</accession>
<accession>Q9M0G6</accession>
<sequence>MACVRSIGSLTSVNHSQRNVPRSGIVLSSCSVLPIKSSSFTGSPVSLPRAQPSSRTALRPMKPVSITMMVKPALQFIQGTDEMTIPDVKLTRSRDGSNGMALFSFDQPSVFDSSGEVGEITGLYMIDEEGVIQSTDVNARFVNGKPEGIVAKHIMRSPKEWDRFMRFMERYSDQNGLQFVKKQ</sequence>
<dbReference type="EMBL" id="AL161573">
    <property type="protein sequence ID" value="CAB81454.1"/>
    <property type="status" value="ALT_SEQ"/>
    <property type="molecule type" value="Genomic_DNA"/>
</dbReference>
<dbReference type="EMBL" id="CP002687">
    <property type="protein sequence ID" value="AEE85519.1"/>
    <property type="molecule type" value="Genomic_DNA"/>
</dbReference>
<dbReference type="EMBL" id="AF462867">
    <property type="protein sequence ID" value="AAL58951.1"/>
    <property type="molecule type" value="mRNA"/>
</dbReference>
<dbReference type="EMBL" id="AY113018">
    <property type="protein sequence ID" value="AAM47326.1"/>
    <property type="molecule type" value="mRNA"/>
</dbReference>
<dbReference type="EMBL" id="AY086344">
    <property type="protein sequence ID" value="AAM64412.1"/>
    <property type="molecule type" value="mRNA"/>
</dbReference>
<dbReference type="PIR" id="T10660">
    <property type="entry name" value="T10660"/>
</dbReference>
<dbReference type="RefSeq" id="NP_567814.1">
    <molecule id="Q8W0Y8-1"/>
    <property type="nucleotide sequence ID" value="NM_119008.4"/>
</dbReference>
<dbReference type="SMR" id="Q8W0Y8"/>
<dbReference type="BioGRID" id="14271">
    <property type="interactions" value="1"/>
</dbReference>
<dbReference type="FunCoup" id="Q8W0Y8">
    <property type="interactions" value="879"/>
</dbReference>
<dbReference type="STRING" id="3702.Q8W0Y8"/>
<dbReference type="iPTMnet" id="Q8W0Y8"/>
<dbReference type="MetOSite" id="Q8W0Y8"/>
<dbReference type="PaxDb" id="3702-AT4G28660.2"/>
<dbReference type="ProteomicsDB" id="226327">
    <molecule id="Q8W0Y8-1"/>
</dbReference>
<dbReference type="EnsemblPlants" id="AT4G28660.1">
    <molecule id="Q8W0Y8-1"/>
    <property type="protein sequence ID" value="AT4G28660.1"/>
    <property type="gene ID" value="AT4G28660"/>
</dbReference>
<dbReference type="GeneID" id="828984"/>
<dbReference type="Gramene" id="AT4G28660.1">
    <molecule id="Q8W0Y8-1"/>
    <property type="protein sequence ID" value="AT4G28660.1"/>
    <property type="gene ID" value="AT4G28660"/>
</dbReference>
<dbReference type="KEGG" id="ath:AT4G28660"/>
<dbReference type="Araport" id="AT4G28660"/>
<dbReference type="TAIR" id="AT4G28660">
    <property type="gene designation" value="PSB28"/>
</dbReference>
<dbReference type="eggNOG" id="ENOG502SAFR">
    <property type="taxonomic scope" value="Eukaryota"/>
</dbReference>
<dbReference type="HOGENOM" id="CLU_098454_0_0_1"/>
<dbReference type="InParanoid" id="Q8W0Y8"/>
<dbReference type="OMA" id="VIMMVKP"/>
<dbReference type="OrthoDB" id="1938621at2759"/>
<dbReference type="PhylomeDB" id="Q8W0Y8"/>
<dbReference type="PRO" id="PR:Q8W0Y8"/>
<dbReference type="Proteomes" id="UP000006548">
    <property type="component" value="Chromosome 4"/>
</dbReference>
<dbReference type="ExpressionAtlas" id="Q8W0Y8">
    <property type="expression patterns" value="baseline and differential"/>
</dbReference>
<dbReference type="GO" id="GO:0009535">
    <property type="term" value="C:chloroplast thylakoid membrane"/>
    <property type="evidence" value="ECO:0007669"/>
    <property type="project" value="UniProtKB-SubCell"/>
</dbReference>
<dbReference type="GO" id="GO:0009654">
    <property type="term" value="C:photosystem II oxygen evolving complex"/>
    <property type="evidence" value="ECO:0007669"/>
    <property type="project" value="InterPro"/>
</dbReference>
<dbReference type="GO" id="GO:0015979">
    <property type="term" value="P:photosynthesis"/>
    <property type="evidence" value="ECO:0007669"/>
    <property type="project" value="UniProtKB-KW"/>
</dbReference>
<dbReference type="FunFam" id="2.40.30.220:FF:000001">
    <property type="entry name" value="Photosystem II reaction center Psb28 protein"/>
    <property type="match status" value="1"/>
</dbReference>
<dbReference type="Gene3D" id="2.40.30.220">
    <property type="entry name" value="Photosystem II Psb28"/>
    <property type="match status" value="1"/>
</dbReference>
<dbReference type="HAMAP" id="MF_01370">
    <property type="entry name" value="PSII_Psb28"/>
    <property type="match status" value="1"/>
</dbReference>
<dbReference type="InterPro" id="IPR038676">
    <property type="entry name" value="Psb28_c1_sf"/>
</dbReference>
<dbReference type="InterPro" id="IPR005610">
    <property type="entry name" value="PSII_Psb28_class-1"/>
</dbReference>
<dbReference type="NCBIfam" id="TIGR03047">
    <property type="entry name" value="PS_II_psb28"/>
    <property type="match status" value="1"/>
</dbReference>
<dbReference type="PANTHER" id="PTHR34963">
    <property type="match status" value="1"/>
</dbReference>
<dbReference type="PANTHER" id="PTHR34963:SF2">
    <property type="entry name" value="PHOTOSYSTEM II REACTION CENTER PSB28 PROTEIN, CHLOROPLASTIC"/>
    <property type="match status" value="1"/>
</dbReference>
<dbReference type="Pfam" id="PF03912">
    <property type="entry name" value="Psb28"/>
    <property type="match status" value="1"/>
</dbReference>
<keyword id="KW-0025">Alternative splicing</keyword>
<keyword id="KW-0150">Chloroplast</keyword>
<keyword id="KW-0472">Membrane</keyword>
<keyword id="KW-0602">Photosynthesis</keyword>
<keyword id="KW-0604">Photosystem II</keyword>
<keyword id="KW-0934">Plastid</keyword>
<keyword id="KW-1185">Reference proteome</keyword>
<keyword id="KW-0793">Thylakoid</keyword>
<keyword id="KW-0809">Transit peptide</keyword>
<gene>
    <name type="primary">PSB28</name>
    <name type="ordered locus">At4g28660</name>
    <name type="ORF">T5F17.110</name>
</gene>
<protein>
    <recommendedName>
        <fullName>Photosystem II reaction center PSB28 protein, chloroplastic</fullName>
    </recommendedName>
    <alternativeName>
        <fullName>Photosystem II protein W-like</fullName>
    </alternativeName>
</protein>
<feature type="transit peptide" description="Chloroplast" evidence="2">
    <location>
        <begin position="1"/>
        <end position="49"/>
    </location>
</feature>
<feature type="chain" id="PRO_0000271577" description="Photosystem II reaction center PSB28 protein, chloroplastic">
    <location>
        <begin position="50"/>
        <end position="183"/>
    </location>
</feature>
<proteinExistence type="evidence at transcript level"/>